<keyword id="KW-0378">Hydrolase</keyword>
<keyword id="KW-0479">Metal-binding</keyword>
<keyword id="KW-1185">Reference proteome</keyword>
<keyword id="KW-0862">Zinc</keyword>
<evidence type="ECO:0000255" key="1">
    <source>
        <dbReference type="HAMAP-Rule" id="MF_00704"/>
    </source>
</evidence>
<gene>
    <name type="ordered locus">alr3912</name>
</gene>
<reference key="1">
    <citation type="journal article" date="2001" name="DNA Res.">
        <title>Complete genomic sequence of the filamentous nitrogen-fixing cyanobacterium Anabaena sp. strain PCC 7120.</title>
        <authorList>
            <person name="Kaneko T."/>
            <person name="Nakamura Y."/>
            <person name="Wolk C.P."/>
            <person name="Kuritz T."/>
            <person name="Sasamoto S."/>
            <person name="Watanabe A."/>
            <person name="Iriguchi M."/>
            <person name="Ishikawa A."/>
            <person name="Kawashima K."/>
            <person name="Kimura T."/>
            <person name="Kishida Y."/>
            <person name="Kohara M."/>
            <person name="Matsumoto M."/>
            <person name="Matsuno A."/>
            <person name="Muraki A."/>
            <person name="Nakazaki N."/>
            <person name="Shimpo S."/>
            <person name="Sugimoto M."/>
            <person name="Takazawa M."/>
            <person name="Yamada M."/>
            <person name="Yasuda M."/>
            <person name="Tabata S."/>
        </authorList>
    </citation>
    <scope>NUCLEOTIDE SEQUENCE [LARGE SCALE GENOMIC DNA]</scope>
    <source>
        <strain>PCC 7120 / SAG 25.82 / UTEX 2576</strain>
    </source>
</reference>
<sequence length="294" mass="32846">MNKINRVAIVGGTHGNEFTGAFLVKKFQQFPEVIQKPSFETLTILGNPKAFEAGKRYIEKDLNRCFLTESLQNTNLSSYEDIRAKQIAGVLGAENKPNVDVVIDLHSTTANMGLSIILGNQDPFLLKLCAYLSDINPLVKVCYTIPEKGSNFLRSLNKLGFVIEVGAVAQGVLNAELFQKTEQLIYTILDYLEQYNRGNIPKINNLLALYKFTGTVDYPRNENGDIQGMIHPDIQFRDYEPLNPGDPLFLTLDGKAIAYEGTSTVYPIFINEAAYYEKGIAMLFTEKQLINPSS</sequence>
<accession>Q8YQC1</accession>
<comment type="catalytic activity">
    <reaction evidence="1">
        <text>an N-acyl-L-aspartate + H2O = a carboxylate + L-aspartate</text>
        <dbReference type="Rhea" id="RHEA:10872"/>
        <dbReference type="ChEBI" id="CHEBI:15377"/>
        <dbReference type="ChEBI" id="CHEBI:29067"/>
        <dbReference type="ChEBI" id="CHEBI:29991"/>
        <dbReference type="ChEBI" id="CHEBI:58497"/>
        <dbReference type="EC" id="3.5.1.15"/>
    </reaction>
</comment>
<comment type="cofactor">
    <cofactor evidence="1">
        <name>Zn(2+)</name>
        <dbReference type="ChEBI" id="CHEBI:29105"/>
    </cofactor>
    <text evidence="1">Binds 1 zinc ion per subunit.</text>
</comment>
<comment type="similarity">
    <text evidence="1">Belongs to the AspA/AstE family. Aspartoacylase subfamily.</text>
</comment>
<name>ASPA_NOSS1</name>
<organism>
    <name type="scientific">Nostoc sp. (strain PCC 7120 / SAG 25.82 / UTEX 2576)</name>
    <dbReference type="NCBI Taxonomy" id="103690"/>
    <lineage>
        <taxon>Bacteria</taxon>
        <taxon>Bacillati</taxon>
        <taxon>Cyanobacteriota</taxon>
        <taxon>Cyanophyceae</taxon>
        <taxon>Nostocales</taxon>
        <taxon>Nostocaceae</taxon>
        <taxon>Nostoc</taxon>
    </lineage>
</organism>
<protein>
    <recommendedName>
        <fullName evidence="1">Probable aspartoacylase</fullName>
        <ecNumber evidence="1">3.5.1.15</ecNumber>
    </recommendedName>
</protein>
<proteinExistence type="inferred from homology"/>
<dbReference type="EC" id="3.5.1.15" evidence="1"/>
<dbReference type="EMBL" id="BA000019">
    <property type="protein sequence ID" value="BAB75611.1"/>
    <property type="molecule type" value="Genomic_DNA"/>
</dbReference>
<dbReference type="PIR" id="AI2294">
    <property type="entry name" value="AI2294"/>
</dbReference>
<dbReference type="RefSeq" id="WP_010998053.1">
    <property type="nucleotide sequence ID" value="NZ_RSCN01000043.1"/>
</dbReference>
<dbReference type="SMR" id="Q8YQC1"/>
<dbReference type="STRING" id="103690.gene:10495954"/>
<dbReference type="KEGG" id="ana:alr3912"/>
<dbReference type="eggNOG" id="COG2988">
    <property type="taxonomic scope" value="Bacteria"/>
</dbReference>
<dbReference type="OrthoDB" id="531770at2"/>
<dbReference type="Proteomes" id="UP000002483">
    <property type="component" value="Chromosome"/>
</dbReference>
<dbReference type="GO" id="GO:0005829">
    <property type="term" value="C:cytosol"/>
    <property type="evidence" value="ECO:0007669"/>
    <property type="project" value="TreeGrafter"/>
</dbReference>
<dbReference type="GO" id="GO:0019807">
    <property type="term" value="F:aspartoacylase activity"/>
    <property type="evidence" value="ECO:0007669"/>
    <property type="project" value="UniProtKB-UniRule"/>
</dbReference>
<dbReference type="GO" id="GO:0016788">
    <property type="term" value="F:hydrolase activity, acting on ester bonds"/>
    <property type="evidence" value="ECO:0007669"/>
    <property type="project" value="InterPro"/>
</dbReference>
<dbReference type="GO" id="GO:0008270">
    <property type="term" value="F:zinc ion binding"/>
    <property type="evidence" value="ECO:0007669"/>
    <property type="project" value="UniProtKB-UniRule"/>
</dbReference>
<dbReference type="CDD" id="cd06909">
    <property type="entry name" value="M14_ASPA"/>
    <property type="match status" value="1"/>
</dbReference>
<dbReference type="FunFam" id="2.20.25.160:FF:000001">
    <property type="entry name" value="Aspartoacylase"/>
    <property type="match status" value="1"/>
</dbReference>
<dbReference type="Gene3D" id="2.20.25.160">
    <property type="match status" value="1"/>
</dbReference>
<dbReference type="Gene3D" id="3.40.630.10">
    <property type="entry name" value="Zn peptidases"/>
    <property type="match status" value="1"/>
</dbReference>
<dbReference type="HAMAP" id="MF_00704">
    <property type="entry name" value="Aspartoacylase"/>
    <property type="match status" value="1"/>
</dbReference>
<dbReference type="InterPro" id="IPR050178">
    <property type="entry name" value="AspA/AstE_fam"/>
</dbReference>
<dbReference type="InterPro" id="IPR016708">
    <property type="entry name" value="Aspartoacylase"/>
</dbReference>
<dbReference type="InterPro" id="IPR055438">
    <property type="entry name" value="AstE_AspA_cat"/>
</dbReference>
<dbReference type="InterPro" id="IPR007036">
    <property type="entry name" value="Aste_AspA_hybrid_dom"/>
</dbReference>
<dbReference type="NCBIfam" id="NF002601">
    <property type="entry name" value="PRK02259.1"/>
    <property type="match status" value="1"/>
</dbReference>
<dbReference type="PANTHER" id="PTHR15162">
    <property type="entry name" value="ASPARTOACYLASE"/>
    <property type="match status" value="1"/>
</dbReference>
<dbReference type="PANTHER" id="PTHR15162:SF7">
    <property type="entry name" value="SUCCINYLGLUTAMATE DESUCCINYLASE"/>
    <property type="match status" value="1"/>
</dbReference>
<dbReference type="Pfam" id="PF24827">
    <property type="entry name" value="AstE_AspA_cat"/>
    <property type="match status" value="1"/>
</dbReference>
<dbReference type="Pfam" id="PF04952">
    <property type="entry name" value="AstE_AspA_hybrid"/>
    <property type="match status" value="1"/>
</dbReference>
<dbReference type="PIRSF" id="PIRSF018001">
    <property type="entry name" value="Aspartoacylase"/>
    <property type="match status" value="1"/>
</dbReference>
<dbReference type="SUPFAM" id="SSF53187">
    <property type="entry name" value="Zn-dependent exopeptidases"/>
    <property type="match status" value="1"/>
</dbReference>
<feature type="chain" id="PRO_0000216877" description="Probable aspartoacylase">
    <location>
        <begin position="1"/>
        <end position="294"/>
    </location>
</feature>
<feature type="binding site" evidence="1">
    <location>
        <position position="14"/>
    </location>
    <ligand>
        <name>Zn(2+)</name>
        <dbReference type="ChEBI" id="CHEBI:29105"/>
    </ligand>
</feature>
<feature type="binding site" evidence="1">
    <location>
        <position position="17"/>
    </location>
    <ligand>
        <name>Zn(2+)</name>
        <dbReference type="ChEBI" id="CHEBI:29105"/>
    </ligand>
</feature>
<feature type="binding site" evidence="1">
    <location>
        <position position="56"/>
    </location>
    <ligand>
        <name>substrate</name>
    </ligand>
</feature>
<feature type="binding site" evidence="1">
    <location>
        <begin position="63"/>
        <end position="64"/>
    </location>
    <ligand>
        <name>substrate</name>
    </ligand>
</feature>
<feature type="binding site" evidence="1">
    <location>
        <position position="106"/>
    </location>
    <ligand>
        <name>Zn(2+)</name>
        <dbReference type="ChEBI" id="CHEBI:29105"/>
    </ligand>
</feature>
<feature type="binding site" evidence="1">
    <location>
        <position position="164"/>
    </location>
    <ligand>
        <name>substrate</name>
    </ligand>
</feature>
<feature type="binding site" evidence="1">
    <location>
        <position position="275"/>
    </location>
    <ligand>
        <name>substrate</name>
    </ligand>
</feature>